<accession>Q6LU34</accession>
<feature type="chain" id="PRO_0000225466" description="Protein-glutamate methylesterase/protein-glutamine glutaminase 1">
    <location>
        <begin position="1"/>
        <end position="350"/>
    </location>
</feature>
<feature type="domain" description="Response regulatory" evidence="1">
    <location>
        <begin position="1"/>
        <end position="116"/>
    </location>
</feature>
<feature type="domain" description="CheB-type methylesterase" evidence="1">
    <location>
        <begin position="160"/>
        <end position="350"/>
    </location>
</feature>
<feature type="active site" evidence="1">
    <location>
        <position position="172"/>
    </location>
</feature>
<feature type="active site" evidence="1">
    <location>
        <position position="198"/>
    </location>
</feature>
<feature type="active site" evidence="1">
    <location>
        <position position="294"/>
    </location>
</feature>
<feature type="modified residue" description="4-aspartylphosphate" evidence="1">
    <location>
        <position position="50"/>
    </location>
</feature>
<dbReference type="EC" id="3.1.1.61" evidence="1"/>
<dbReference type="EC" id="3.5.1.44" evidence="1"/>
<dbReference type="EMBL" id="CR378665">
    <property type="protein sequence ID" value="CAG19191.1"/>
    <property type="molecule type" value="Genomic_DNA"/>
</dbReference>
<dbReference type="SMR" id="Q6LU34"/>
<dbReference type="STRING" id="298386.PBPRA0778"/>
<dbReference type="KEGG" id="ppr:PBPRA0778"/>
<dbReference type="eggNOG" id="COG2201">
    <property type="taxonomic scope" value="Bacteria"/>
</dbReference>
<dbReference type="HOGENOM" id="CLU_000445_51_0_6"/>
<dbReference type="Proteomes" id="UP000000593">
    <property type="component" value="Chromosome 1"/>
</dbReference>
<dbReference type="GO" id="GO:0005737">
    <property type="term" value="C:cytoplasm"/>
    <property type="evidence" value="ECO:0007669"/>
    <property type="project" value="UniProtKB-SubCell"/>
</dbReference>
<dbReference type="GO" id="GO:0000156">
    <property type="term" value="F:phosphorelay response regulator activity"/>
    <property type="evidence" value="ECO:0007669"/>
    <property type="project" value="InterPro"/>
</dbReference>
<dbReference type="GO" id="GO:0008984">
    <property type="term" value="F:protein-glutamate methylesterase activity"/>
    <property type="evidence" value="ECO:0007669"/>
    <property type="project" value="UniProtKB-UniRule"/>
</dbReference>
<dbReference type="GO" id="GO:0050568">
    <property type="term" value="F:protein-glutamine glutaminase activity"/>
    <property type="evidence" value="ECO:0007669"/>
    <property type="project" value="UniProtKB-UniRule"/>
</dbReference>
<dbReference type="GO" id="GO:0006935">
    <property type="term" value="P:chemotaxis"/>
    <property type="evidence" value="ECO:0007669"/>
    <property type="project" value="UniProtKB-UniRule"/>
</dbReference>
<dbReference type="CDD" id="cd16432">
    <property type="entry name" value="CheB_Rec"/>
    <property type="match status" value="1"/>
</dbReference>
<dbReference type="CDD" id="cd17541">
    <property type="entry name" value="REC_CheB-like"/>
    <property type="match status" value="1"/>
</dbReference>
<dbReference type="Gene3D" id="3.40.50.2300">
    <property type="match status" value="1"/>
</dbReference>
<dbReference type="Gene3D" id="3.40.50.180">
    <property type="entry name" value="Methylesterase CheB, C-terminal domain"/>
    <property type="match status" value="1"/>
</dbReference>
<dbReference type="HAMAP" id="MF_00099">
    <property type="entry name" value="CheB_chemtxs"/>
    <property type="match status" value="1"/>
</dbReference>
<dbReference type="InterPro" id="IPR008248">
    <property type="entry name" value="CheB-like"/>
</dbReference>
<dbReference type="InterPro" id="IPR035909">
    <property type="entry name" value="CheB_C"/>
</dbReference>
<dbReference type="InterPro" id="IPR011006">
    <property type="entry name" value="CheY-like_superfamily"/>
</dbReference>
<dbReference type="InterPro" id="IPR000673">
    <property type="entry name" value="Sig_transdc_resp-reg_Me-estase"/>
</dbReference>
<dbReference type="InterPro" id="IPR001789">
    <property type="entry name" value="Sig_transdc_resp-reg_receiver"/>
</dbReference>
<dbReference type="NCBIfam" id="NF001965">
    <property type="entry name" value="PRK00742.1"/>
    <property type="match status" value="1"/>
</dbReference>
<dbReference type="NCBIfam" id="NF009206">
    <property type="entry name" value="PRK12555.1"/>
    <property type="match status" value="1"/>
</dbReference>
<dbReference type="PANTHER" id="PTHR42872">
    <property type="entry name" value="PROTEIN-GLUTAMATE METHYLESTERASE/PROTEIN-GLUTAMINE GLUTAMINASE"/>
    <property type="match status" value="1"/>
</dbReference>
<dbReference type="PANTHER" id="PTHR42872:SF6">
    <property type="entry name" value="PROTEIN-GLUTAMATE METHYLESTERASE_PROTEIN-GLUTAMINE GLUTAMINASE"/>
    <property type="match status" value="1"/>
</dbReference>
<dbReference type="Pfam" id="PF01339">
    <property type="entry name" value="CheB_methylest"/>
    <property type="match status" value="1"/>
</dbReference>
<dbReference type="Pfam" id="PF00072">
    <property type="entry name" value="Response_reg"/>
    <property type="match status" value="1"/>
</dbReference>
<dbReference type="PIRSF" id="PIRSF000876">
    <property type="entry name" value="RR_chemtxs_CheB"/>
    <property type="match status" value="1"/>
</dbReference>
<dbReference type="SMART" id="SM00448">
    <property type="entry name" value="REC"/>
    <property type="match status" value="1"/>
</dbReference>
<dbReference type="SUPFAM" id="SSF52172">
    <property type="entry name" value="CheY-like"/>
    <property type="match status" value="1"/>
</dbReference>
<dbReference type="SUPFAM" id="SSF52738">
    <property type="entry name" value="Methylesterase CheB, C-terminal domain"/>
    <property type="match status" value="1"/>
</dbReference>
<dbReference type="PROSITE" id="PS50122">
    <property type="entry name" value="CHEB"/>
    <property type="match status" value="1"/>
</dbReference>
<dbReference type="PROSITE" id="PS50110">
    <property type="entry name" value="RESPONSE_REGULATORY"/>
    <property type="match status" value="1"/>
</dbReference>
<reference key="1">
    <citation type="journal article" date="2005" name="Science">
        <title>Life at depth: Photobacterium profundum genome sequence and expression analysis.</title>
        <authorList>
            <person name="Vezzi A."/>
            <person name="Campanaro S."/>
            <person name="D'Angelo M."/>
            <person name="Simonato F."/>
            <person name="Vitulo N."/>
            <person name="Lauro F.M."/>
            <person name="Cestaro A."/>
            <person name="Malacrida G."/>
            <person name="Simionati B."/>
            <person name="Cannata N."/>
            <person name="Romualdi C."/>
            <person name="Bartlett D.H."/>
            <person name="Valle G."/>
        </authorList>
    </citation>
    <scope>NUCLEOTIDE SEQUENCE [LARGE SCALE GENOMIC DNA]</scope>
    <source>
        <strain>ATCC BAA-1253 / SS9</strain>
    </source>
</reference>
<organism>
    <name type="scientific">Photobacterium profundum (strain SS9)</name>
    <dbReference type="NCBI Taxonomy" id="298386"/>
    <lineage>
        <taxon>Bacteria</taxon>
        <taxon>Pseudomonadati</taxon>
        <taxon>Pseudomonadota</taxon>
        <taxon>Gammaproteobacteria</taxon>
        <taxon>Vibrionales</taxon>
        <taxon>Vibrionaceae</taxon>
        <taxon>Photobacterium</taxon>
    </lineage>
</organism>
<comment type="function">
    <text evidence="1">Involved in chemotaxis. Part of a chemotaxis signal transduction system that modulates chemotaxis in response to various stimuli. Catalyzes the demethylation of specific methylglutamate residues introduced into the chemoreceptors (methyl-accepting chemotaxis proteins or MCP) by CheR. Also mediates the irreversible deamidation of specific glutamine residues to glutamic acid.</text>
</comment>
<comment type="catalytic activity">
    <reaction evidence="1">
        <text>[protein]-L-glutamate 5-O-methyl ester + H2O = L-glutamyl-[protein] + methanol + H(+)</text>
        <dbReference type="Rhea" id="RHEA:23236"/>
        <dbReference type="Rhea" id="RHEA-COMP:10208"/>
        <dbReference type="Rhea" id="RHEA-COMP:10311"/>
        <dbReference type="ChEBI" id="CHEBI:15377"/>
        <dbReference type="ChEBI" id="CHEBI:15378"/>
        <dbReference type="ChEBI" id="CHEBI:17790"/>
        <dbReference type="ChEBI" id="CHEBI:29973"/>
        <dbReference type="ChEBI" id="CHEBI:82795"/>
        <dbReference type="EC" id="3.1.1.61"/>
    </reaction>
</comment>
<comment type="catalytic activity">
    <reaction evidence="1">
        <text>L-glutaminyl-[protein] + H2O = L-glutamyl-[protein] + NH4(+)</text>
        <dbReference type="Rhea" id="RHEA:16441"/>
        <dbReference type="Rhea" id="RHEA-COMP:10207"/>
        <dbReference type="Rhea" id="RHEA-COMP:10208"/>
        <dbReference type="ChEBI" id="CHEBI:15377"/>
        <dbReference type="ChEBI" id="CHEBI:28938"/>
        <dbReference type="ChEBI" id="CHEBI:29973"/>
        <dbReference type="ChEBI" id="CHEBI:30011"/>
        <dbReference type="EC" id="3.5.1.44"/>
    </reaction>
</comment>
<comment type="subcellular location">
    <subcellularLocation>
        <location evidence="1">Cytoplasm</location>
    </subcellularLocation>
</comment>
<comment type="domain">
    <text evidence="1">Contains a C-terminal catalytic domain, and an N-terminal region which modulates catalytic activity.</text>
</comment>
<comment type="PTM">
    <text evidence="1">Phosphorylated by CheA. Phosphorylation of the N-terminal regulatory domain activates the methylesterase activity.</text>
</comment>
<comment type="similarity">
    <text evidence="1">Belongs to the CheB family.</text>
</comment>
<name>CHEB1_PHOPR</name>
<gene>
    <name evidence="1" type="primary">cheB1</name>
    <name type="ordered locus">PBPRA0778</name>
</gene>
<sequence length="350" mass="37297">MVVDDSAVVRQVVSSVLKSDSEIEVCGAVADPLFAMTRMRMQWPDVIVLDIEMPRMDGISFLKKIMAERPTPVVICSTLTEKGADTTMQAISAGAVEIITKPKVGLKGFLHDSAKVLINAVKAASRANLKPLQRAMASNLKVTPKLSADAVLAEGNTSRLKTTEQLVAIGTSTGGTQALELVLKALPRVSPGIVIVQHMPEKFTAAFAERLDSLCEISVKEAKHKMRVLPGQALIAPGGKHMLLKRSGAQYYVEVIDGPLVSRHRPSVDVLFRSVAQSASGNALGIIMTGMGDDGVKGMLEMRRAGAVTLAQDEASCVVYGMPKEAVKCGAVERSLSLSEIPQAILDCSH</sequence>
<proteinExistence type="inferred from homology"/>
<evidence type="ECO:0000255" key="1">
    <source>
        <dbReference type="HAMAP-Rule" id="MF_00099"/>
    </source>
</evidence>
<keyword id="KW-0145">Chemotaxis</keyword>
<keyword id="KW-0963">Cytoplasm</keyword>
<keyword id="KW-0378">Hydrolase</keyword>
<keyword id="KW-0597">Phosphoprotein</keyword>
<keyword id="KW-1185">Reference proteome</keyword>
<protein>
    <recommendedName>
        <fullName evidence="1">Protein-glutamate methylesterase/protein-glutamine glutaminase 1</fullName>
        <ecNumber evidence="1">3.1.1.61</ecNumber>
        <ecNumber evidence="1">3.5.1.44</ecNumber>
    </recommendedName>
</protein>